<keyword id="KW-0175">Coiled coil</keyword>
<keyword id="KW-0436">Ligase</keyword>
<keyword id="KW-1185">Reference proteome</keyword>
<evidence type="ECO:0000255" key="1">
    <source>
        <dbReference type="HAMAP-Rule" id="MF_01867"/>
    </source>
</evidence>
<feature type="chain" id="PRO_0000378245" description="Putative cysteine ligase BshC">
    <location>
        <begin position="1"/>
        <end position="543"/>
    </location>
</feature>
<feature type="coiled-coil region" evidence="1">
    <location>
        <begin position="419"/>
        <end position="440"/>
    </location>
</feature>
<reference key="1">
    <citation type="journal article" date="2002" name="Nucleic Acids Res.">
        <title>Genome sequence of Oceanobacillus iheyensis isolated from the Iheya Ridge and its unexpected adaptive capabilities to extreme environments.</title>
        <authorList>
            <person name="Takami H."/>
            <person name="Takaki Y."/>
            <person name="Uchiyama I."/>
        </authorList>
    </citation>
    <scope>NUCLEOTIDE SEQUENCE [LARGE SCALE GENOMIC DNA]</scope>
    <source>
        <strain>DSM 14371 / CIP 107618 / JCM 11309 / KCTC 3954 / HTE831</strain>
    </source>
</reference>
<protein>
    <recommendedName>
        <fullName evidence="1">Putative cysteine ligase BshC</fullName>
        <ecNumber evidence="1">6.-.-.-</ecNumber>
    </recommendedName>
</protein>
<gene>
    <name evidence="1" type="primary">bshC</name>
    <name type="ordered locus">OB1460</name>
</gene>
<accession>Q8ER55</accession>
<dbReference type="EC" id="6.-.-.-" evidence="1"/>
<dbReference type="EMBL" id="BA000028">
    <property type="protein sequence ID" value="BAC13416.1"/>
    <property type="molecule type" value="Genomic_DNA"/>
</dbReference>
<dbReference type="RefSeq" id="WP_011065861.1">
    <property type="nucleotide sequence ID" value="NC_004193.1"/>
</dbReference>
<dbReference type="SMR" id="Q8ER55"/>
<dbReference type="STRING" id="221109.gene:10733700"/>
<dbReference type="KEGG" id="oih:OB1460"/>
<dbReference type="eggNOG" id="COG4365">
    <property type="taxonomic scope" value="Bacteria"/>
</dbReference>
<dbReference type="HOGENOM" id="CLU_022249_1_0_9"/>
<dbReference type="OrthoDB" id="9765151at2"/>
<dbReference type="PhylomeDB" id="Q8ER55"/>
<dbReference type="Proteomes" id="UP000000822">
    <property type="component" value="Chromosome"/>
</dbReference>
<dbReference type="GO" id="GO:0016874">
    <property type="term" value="F:ligase activity"/>
    <property type="evidence" value="ECO:0007669"/>
    <property type="project" value="UniProtKB-UniRule"/>
</dbReference>
<dbReference type="HAMAP" id="MF_01867">
    <property type="entry name" value="BshC"/>
    <property type="match status" value="1"/>
</dbReference>
<dbReference type="InterPro" id="IPR011199">
    <property type="entry name" value="Bacillithiol_biosynth_BshC"/>
</dbReference>
<dbReference type="InterPro" id="IPR055399">
    <property type="entry name" value="CC_BshC"/>
</dbReference>
<dbReference type="InterPro" id="IPR055398">
    <property type="entry name" value="Rossmann-like_BshC"/>
</dbReference>
<dbReference type="NCBIfam" id="TIGR03998">
    <property type="entry name" value="thiol_BshC"/>
    <property type="match status" value="1"/>
</dbReference>
<dbReference type="Pfam" id="PF24850">
    <property type="entry name" value="CC_BshC"/>
    <property type="match status" value="1"/>
</dbReference>
<dbReference type="Pfam" id="PF10079">
    <property type="entry name" value="Rossmann-like_BshC"/>
    <property type="match status" value="1"/>
</dbReference>
<dbReference type="PIRSF" id="PIRSF012535">
    <property type="entry name" value="UCP012535"/>
    <property type="match status" value="1"/>
</dbReference>
<organism>
    <name type="scientific">Oceanobacillus iheyensis (strain DSM 14371 / CIP 107618 / JCM 11309 / KCTC 3954 / HTE831)</name>
    <dbReference type="NCBI Taxonomy" id="221109"/>
    <lineage>
        <taxon>Bacteria</taxon>
        <taxon>Bacillati</taxon>
        <taxon>Bacillota</taxon>
        <taxon>Bacilli</taxon>
        <taxon>Bacillales</taxon>
        <taxon>Bacillaceae</taxon>
        <taxon>Oceanobacillus</taxon>
    </lineage>
</organism>
<name>BSHC_OCEIH</name>
<comment type="function">
    <text evidence="1">Involved in bacillithiol (BSH) biosynthesis. May catalyze the last step of the pathway, the addition of cysteine to glucosamine malate (GlcN-Mal) to generate BSH.</text>
</comment>
<comment type="similarity">
    <text evidence="1">Belongs to the BshC family.</text>
</comment>
<proteinExistence type="inferred from homology"/>
<sequence>MKTTPLSIQTTNKLVTNYKNNDASVMKYFDYSSIHYEQERLAYLNNRTYKRQDFVKAVHKLHKKWGAPEASMEKLNKLVDEQAVAVVGGQQAGLLSGPLYSIHKVISVIQLAKEQEKKLGIPVVPIFWIAGEDHDFDEINHTYVPTTDMKMKKVKLQNKSIDAGRKSVTDLEFEKDKLREWVEDVFLSLKETDYTQDIHSLVQTVLSESDSYSEFFAKFIFQLFPDQGIVLLDSHASEIREIETDFFLEMIEHQQGISSAVKSTIDELKAEEYSISLDALDGDAHLFYHDEQLGRVLLQVDPDGMWVDKQHNMRFTVEELRSIAINSPHLLSNNVITRPMMQEKLIPTLAFVGGPGEIAYWSALKDSFHLLELKMPPIVPRISFTYIDRYTSRLLDKYNLNVSEIISTGVNDHKRRFLDEKNNDNIDEVVEEVKAQISDIHKPLRDISASMGDDIKALSESNLSYILNDVEFLRKRLNNEIRKTYAKEISEFDRMEMILRPNNGLQERIWNPIYIMNCCGVDVFTEMVNNHTFVQEEHWIIHL</sequence>